<proteinExistence type="evidence at transcript level"/>
<sequence length="373" mass="41582">MSSFLPEGGCYELLTVIGKGFEDLMTVNLARYKPTGEYVTVRRINLEACSNEMVTFLQGELHVSKLFSHPNILPYGATFIADNELWVVTSFMAYGSAKDLICTHFMDGMSELAIAYILQGALKALDYIHHMGYVHRSVKASHVLISADGKVYLSGLRSNLSMISHGQRQRVVHDFPKYSIKVLPWLSPEVLQQNLQGYDAKSDIYSVGITACELANGHVPFKDMPATQMLLEKLNGTVPCLLDTSTIPAEELTMSTSRSAANSGLSESLAPSTPRTSNGDSPSHPYHRTFSPHFHHFVEQCLQRNPDMRPSASTLLNHSFFKQIKRRASEALPELLRPVTPITTFEGRQSQDHSGIFGLVTNLEELEVDDWEF</sequence>
<comment type="function">
    <text evidence="1">Pseudokinase which, in complex with CAB39/MO25 (CAB39/MO25alpha or CAB39L/MO25beta), binds to and activates STK11/LKB1. Adopts a closed conformation typical of active protein kinases and binds STK11/LKB1 as a pseudosubstrate, promoting conformational change of STK11/LKB1 in an active conformation (By similarity).</text>
</comment>
<comment type="subunit">
    <text evidence="1">Component of a trimeric complex composed of STK11/LKB1, STRAD (STRADA or STRADB) and CAB39/MO25 (CAB39/MO25alpha or CAB39L/MO25beta): the complex tethers STK11/LKB1 in the cytoplasm and stimulates its catalytic activity.</text>
</comment>
<comment type="subcellular location">
    <subcellularLocation>
        <location evidence="1">Nucleus</location>
    </subcellularLocation>
    <subcellularLocation>
        <location evidence="2">Cytoplasm</location>
    </subcellularLocation>
</comment>
<comment type="domain">
    <text evidence="3">The protein kinase domain is predicted to be catalytically inactive.</text>
</comment>
<comment type="similarity">
    <text evidence="6">Belongs to the protein kinase superfamily. STE Ser/Thr protein kinase family. STE20 subfamily.</text>
</comment>
<gene>
    <name type="primary">STRADA</name>
    <name evidence="7" type="synonym">LYK5</name>
    <name type="synonym">STRAD</name>
</gene>
<evidence type="ECO:0000250" key="1"/>
<evidence type="ECO:0000250" key="2">
    <source>
        <dbReference type="UniProtKB" id="Q7RTN6"/>
    </source>
</evidence>
<evidence type="ECO:0000255" key="3"/>
<evidence type="ECO:0000255" key="4">
    <source>
        <dbReference type="PROSITE-ProRule" id="PRU00159"/>
    </source>
</evidence>
<evidence type="ECO:0000256" key="5">
    <source>
        <dbReference type="SAM" id="MobiDB-lite"/>
    </source>
</evidence>
<evidence type="ECO:0000305" key="6"/>
<evidence type="ECO:0000312" key="7">
    <source>
        <dbReference type="EMBL" id="AAX08938.1"/>
    </source>
</evidence>
<dbReference type="EMBL" id="BT020921">
    <property type="protein sequence ID" value="AAX08938.1"/>
    <property type="molecule type" value="mRNA"/>
</dbReference>
<dbReference type="RefSeq" id="NP_001015603.1">
    <property type="nucleotide sequence ID" value="NM_001015603.1"/>
</dbReference>
<dbReference type="RefSeq" id="XP_005220926.1">
    <property type="nucleotide sequence ID" value="XM_005220869.3"/>
</dbReference>
<dbReference type="RefSeq" id="XP_005220927.1">
    <property type="nucleotide sequence ID" value="XM_005220870.3"/>
</dbReference>
<dbReference type="RefSeq" id="XP_005220929.1">
    <property type="nucleotide sequence ID" value="XM_005220872.3"/>
</dbReference>
<dbReference type="RefSeq" id="XP_005220930.1">
    <property type="nucleotide sequence ID" value="XM_005220873.3"/>
</dbReference>
<dbReference type="RefSeq" id="XP_015314359.1">
    <property type="nucleotide sequence ID" value="XM_015458873.1"/>
</dbReference>
<dbReference type="RefSeq" id="XP_059734001.1">
    <property type="nucleotide sequence ID" value="XM_059878018.1"/>
</dbReference>
<dbReference type="RefSeq" id="XP_059734002.1">
    <property type="nucleotide sequence ID" value="XM_059878019.1"/>
</dbReference>
<dbReference type="RefSeq" id="XP_059734003.1">
    <property type="nucleotide sequence ID" value="XM_059878020.1"/>
</dbReference>
<dbReference type="RefSeq" id="XP_059734004.1">
    <property type="nucleotide sequence ID" value="XM_059878021.1"/>
</dbReference>
<dbReference type="SMR" id="Q5E9J9"/>
<dbReference type="FunCoup" id="Q5E9J9">
    <property type="interactions" value="4428"/>
</dbReference>
<dbReference type="STRING" id="9913.ENSBTAP00000060197"/>
<dbReference type="PaxDb" id="9913-ENSBTAP00000051279"/>
<dbReference type="GeneID" id="515024"/>
<dbReference type="KEGG" id="bta:515024"/>
<dbReference type="CTD" id="92335"/>
<dbReference type="VEuPathDB" id="HostDB:ENSBTAG00000000056"/>
<dbReference type="eggNOG" id="KOG0582">
    <property type="taxonomic scope" value="Eukaryota"/>
</dbReference>
<dbReference type="HOGENOM" id="CLU_000288_63_23_1"/>
<dbReference type="InParanoid" id="Q5E9J9"/>
<dbReference type="OMA" id="INGVMPF"/>
<dbReference type="OrthoDB" id="840771at2759"/>
<dbReference type="Reactome" id="R-BTA-380972">
    <property type="pathway name" value="Energy dependent regulation of mTOR by LKB1-AMPK"/>
</dbReference>
<dbReference type="Proteomes" id="UP000009136">
    <property type="component" value="Chromosome 19"/>
</dbReference>
<dbReference type="Bgee" id="ENSBTAG00000000056">
    <property type="expression patterns" value="Expressed in spermatid and 105 other cell types or tissues"/>
</dbReference>
<dbReference type="GO" id="GO:0005737">
    <property type="term" value="C:cytoplasm"/>
    <property type="evidence" value="ECO:0000250"/>
    <property type="project" value="UniProtKB"/>
</dbReference>
<dbReference type="GO" id="GO:0005634">
    <property type="term" value="C:nucleus"/>
    <property type="evidence" value="ECO:0000250"/>
    <property type="project" value="UniProtKB"/>
</dbReference>
<dbReference type="GO" id="GO:1902554">
    <property type="term" value="C:serine/threonine protein kinase complex"/>
    <property type="evidence" value="ECO:0000318"/>
    <property type="project" value="GO_Central"/>
</dbReference>
<dbReference type="GO" id="GO:0005524">
    <property type="term" value="F:ATP binding"/>
    <property type="evidence" value="ECO:0007669"/>
    <property type="project" value="InterPro"/>
</dbReference>
<dbReference type="GO" id="GO:0030295">
    <property type="term" value="F:protein kinase activator activity"/>
    <property type="evidence" value="ECO:0000250"/>
    <property type="project" value="UniProtKB"/>
</dbReference>
<dbReference type="GO" id="GO:0004672">
    <property type="term" value="F:protein kinase activity"/>
    <property type="evidence" value="ECO:0007669"/>
    <property type="project" value="InterPro"/>
</dbReference>
<dbReference type="GO" id="GO:0043539">
    <property type="term" value="F:protein serine/threonine kinase activator activity"/>
    <property type="evidence" value="ECO:0000318"/>
    <property type="project" value="GO_Central"/>
</dbReference>
<dbReference type="GO" id="GO:0032147">
    <property type="term" value="P:activation of protein kinase activity"/>
    <property type="evidence" value="ECO:0000250"/>
    <property type="project" value="UniProtKB"/>
</dbReference>
<dbReference type="GO" id="GO:0006611">
    <property type="term" value="P:protein export from nucleus"/>
    <property type="evidence" value="ECO:0000250"/>
    <property type="project" value="UniProtKB"/>
</dbReference>
<dbReference type="CDD" id="cd08227">
    <property type="entry name" value="PK_STRAD_alpha"/>
    <property type="match status" value="1"/>
</dbReference>
<dbReference type="FunFam" id="3.30.200.20:FF:000130">
    <property type="entry name" value="STE20-related kinase adapter protein alpha"/>
    <property type="match status" value="1"/>
</dbReference>
<dbReference type="FunFam" id="1.10.510.10:FF:000213">
    <property type="entry name" value="STE20-related kinase adapter protein alpha isoform X2"/>
    <property type="match status" value="1"/>
</dbReference>
<dbReference type="Gene3D" id="3.30.200.20">
    <property type="entry name" value="Phosphorylase Kinase, domain 1"/>
    <property type="match status" value="1"/>
</dbReference>
<dbReference type="Gene3D" id="1.10.510.10">
    <property type="entry name" value="Transferase(Phosphotransferase) domain 1"/>
    <property type="match status" value="1"/>
</dbReference>
<dbReference type="InterPro" id="IPR011009">
    <property type="entry name" value="Kinase-like_dom_sf"/>
</dbReference>
<dbReference type="InterPro" id="IPR000719">
    <property type="entry name" value="Prot_kinase_dom"/>
</dbReference>
<dbReference type="InterPro" id="IPR047173">
    <property type="entry name" value="STRAD_A/B-like"/>
</dbReference>
<dbReference type="PANTHER" id="PTHR48014">
    <property type="entry name" value="SERINE/THREONINE-PROTEIN KINASE FRAY2"/>
    <property type="match status" value="1"/>
</dbReference>
<dbReference type="PANTHER" id="PTHR48014:SF20">
    <property type="entry name" value="STE20-RELATED KINASE ADAPTER PROTEIN ALPHA"/>
    <property type="match status" value="1"/>
</dbReference>
<dbReference type="Pfam" id="PF00069">
    <property type="entry name" value="Pkinase"/>
    <property type="match status" value="1"/>
</dbReference>
<dbReference type="SUPFAM" id="SSF56112">
    <property type="entry name" value="Protein kinase-like (PK-like)"/>
    <property type="match status" value="1"/>
</dbReference>
<dbReference type="PROSITE" id="PS50011">
    <property type="entry name" value="PROTEIN_KINASE_DOM"/>
    <property type="match status" value="1"/>
</dbReference>
<accession>Q5E9J9</accession>
<name>STRAA_BOVIN</name>
<keyword id="KW-0131">Cell cycle</keyword>
<keyword id="KW-0963">Cytoplasm</keyword>
<keyword id="KW-0539">Nucleus</keyword>
<keyword id="KW-0597">Phosphoprotein</keyword>
<keyword id="KW-1185">Reference proteome</keyword>
<protein>
    <recommendedName>
        <fullName>STE20-related kinase adapter protein alpha</fullName>
        <shortName>STRAD alpha</shortName>
    </recommendedName>
    <alternativeName>
        <fullName>STE20-related adapter protein</fullName>
    </alternativeName>
</protein>
<feature type="chain" id="PRO_0000260034" description="STE20-related kinase adapter protein alpha">
    <location>
        <begin position="1"/>
        <end position="373"/>
    </location>
</feature>
<feature type="domain" description="Protein kinase" evidence="4">
    <location>
        <begin position="11"/>
        <end position="321"/>
    </location>
</feature>
<feature type="region of interest" description="Disordered" evidence="5">
    <location>
        <begin position="255"/>
        <end position="288"/>
    </location>
</feature>
<feature type="compositionally biased region" description="Polar residues" evidence="5">
    <location>
        <begin position="255"/>
        <end position="281"/>
    </location>
</feature>
<feature type="modified residue" description="Phosphothreonine; by LKB1" evidence="2">
    <location>
        <position position="361"/>
    </location>
</feature>
<organism>
    <name type="scientific">Bos taurus</name>
    <name type="common">Bovine</name>
    <dbReference type="NCBI Taxonomy" id="9913"/>
    <lineage>
        <taxon>Eukaryota</taxon>
        <taxon>Metazoa</taxon>
        <taxon>Chordata</taxon>
        <taxon>Craniata</taxon>
        <taxon>Vertebrata</taxon>
        <taxon>Euteleostomi</taxon>
        <taxon>Mammalia</taxon>
        <taxon>Eutheria</taxon>
        <taxon>Laurasiatheria</taxon>
        <taxon>Artiodactyla</taxon>
        <taxon>Ruminantia</taxon>
        <taxon>Pecora</taxon>
        <taxon>Bovidae</taxon>
        <taxon>Bovinae</taxon>
        <taxon>Bos</taxon>
    </lineage>
</organism>
<reference evidence="7" key="1">
    <citation type="journal article" date="2005" name="BMC Genomics">
        <title>Characterization of 954 bovine full-CDS cDNA sequences.</title>
        <authorList>
            <person name="Harhay G.P."/>
            <person name="Sonstegard T.S."/>
            <person name="Keele J.W."/>
            <person name="Heaton M.P."/>
            <person name="Clawson M.L."/>
            <person name="Snelling W.M."/>
            <person name="Wiedmann R.T."/>
            <person name="Van Tassell C.P."/>
            <person name="Smith T.P.L."/>
        </authorList>
    </citation>
    <scope>NUCLEOTIDE SEQUENCE [LARGE SCALE MRNA]</scope>
</reference>